<organism>
    <name type="scientific">Burkholderia mallei (strain SAVP1)</name>
    <dbReference type="NCBI Taxonomy" id="320388"/>
    <lineage>
        <taxon>Bacteria</taxon>
        <taxon>Pseudomonadati</taxon>
        <taxon>Pseudomonadota</taxon>
        <taxon>Betaproteobacteria</taxon>
        <taxon>Burkholderiales</taxon>
        <taxon>Burkholderiaceae</taxon>
        <taxon>Burkholderia</taxon>
        <taxon>pseudomallei group</taxon>
    </lineage>
</organism>
<sequence>MSNEAKCPFHQAAGNGTSNRDWWPNQLDLSILHRHSSLSDPMGKDFNYAQAFEKLDLAAVKRDLHALMTTSQDWWPADFGHYGGLFIRMAWHSAGTYRTADGRGGAGEGQQRFAPLNSWPDNANLDKARRLLWPIKQKYGRAISWADLLILTGNVALESMGFKTFGFAGGRADTWEPEDVYWGSEKIWLELSGGPNSRYSGDRQLENPLAAVQMGLIYVNPEGPDGNPDPVAAARDIRDTFARMAMNDEETVALIAGGHTFGKTHGAGPASNVGAEPEAAGIEAQGLGWKSAYRTGKGADAITSGLEVTWTTTPTQWSHNFFENLFGYEWELTKSPAGAHQWVAKGADAVIPDAFDPSKKHRPTMLTTDLSLRFDPAYEKISRRFHENPEQFADAFARAWFKLTHRDMGPRARYLGPEVPAEVLLWQDPIPAVDHPLIDAADAAELKAKVLASGLTVSQLVSTAWAAASTFRGSDKRGGANGARIRLAPQKDWEANQPEQLAAVLETLEAIRTAFNGAQRGGKQVSLADLIVLAGCAGVEQAAKNAGHAVTVPFAPGRADASQEQTDVESMAVLEPVADGFRNYLKGKYRVPAEVLLVDKAQLLTLSAPEMTVLLGGLRVLGANVGQSRHGVFTAREQALTNDFFVNLLDMGTEWKPTAADADVFEGRDRATGALKWTGTRVDLVFGSHSQLRALAEVYGSADAQEKFVRDFVAVWNKVMNLDRFDLA</sequence>
<reference key="1">
    <citation type="journal article" date="2010" name="Genome Biol. Evol.">
        <title>Continuing evolution of Burkholderia mallei through genome reduction and large-scale rearrangements.</title>
        <authorList>
            <person name="Losada L."/>
            <person name="Ronning C.M."/>
            <person name="DeShazer D."/>
            <person name="Woods D."/>
            <person name="Fedorova N."/>
            <person name="Kim H.S."/>
            <person name="Shabalina S.A."/>
            <person name="Pearson T.R."/>
            <person name="Brinkac L."/>
            <person name="Tan P."/>
            <person name="Nandi T."/>
            <person name="Crabtree J."/>
            <person name="Badger J."/>
            <person name="Beckstrom-Sternberg S."/>
            <person name="Saqib M."/>
            <person name="Schutzer S.E."/>
            <person name="Keim P."/>
            <person name="Nierman W.C."/>
        </authorList>
    </citation>
    <scope>NUCLEOTIDE SEQUENCE [LARGE SCALE GENOMIC DNA]</scope>
    <source>
        <strain>SAVP1</strain>
    </source>
</reference>
<accession>A1V0A6</accession>
<comment type="function">
    <text evidence="1">Bifunctional enzyme with both catalase and broad-spectrum peroxidase activity.</text>
</comment>
<comment type="catalytic activity">
    <reaction evidence="1">
        <text>H2O2 + AH2 = A + 2 H2O</text>
        <dbReference type="Rhea" id="RHEA:30275"/>
        <dbReference type="ChEBI" id="CHEBI:13193"/>
        <dbReference type="ChEBI" id="CHEBI:15377"/>
        <dbReference type="ChEBI" id="CHEBI:16240"/>
        <dbReference type="ChEBI" id="CHEBI:17499"/>
        <dbReference type="EC" id="1.11.1.21"/>
    </reaction>
</comment>
<comment type="catalytic activity">
    <reaction evidence="1">
        <text>2 H2O2 = O2 + 2 H2O</text>
        <dbReference type="Rhea" id="RHEA:20309"/>
        <dbReference type="ChEBI" id="CHEBI:15377"/>
        <dbReference type="ChEBI" id="CHEBI:15379"/>
        <dbReference type="ChEBI" id="CHEBI:16240"/>
        <dbReference type="EC" id="1.11.1.21"/>
    </reaction>
</comment>
<comment type="cofactor">
    <cofactor evidence="1">
        <name>heme b</name>
        <dbReference type="ChEBI" id="CHEBI:60344"/>
    </cofactor>
    <text evidence="1">Binds 1 heme b (iron(II)-protoporphyrin IX) group per dimer.</text>
</comment>
<comment type="subunit">
    <text evidence="1">Homodimer or homotetramer.</text>
</comment>
<comment type="PTM">
    <text evidence="1">Formation of the three residue Trp-Tyr-Met cross-link is important for the catalase, but not the peroxidase activity of the enzyme.</text>
</comment>
<comment type="similarity">
    <text evidence="1">Belongs to the peroxidase family. Peroxidase/catalase subfamily.</text>
</comment>
<feature type="chain" id="PRO_0000354744" description="Catalase-peroxidase">
    <location>
        <begin position="1"/>
        <end position="728"/>
    </location>
</feature>
<feature type="active site" description="Proton acceptor" evidence="1">
    <location>
        <position position="92"/>
    </location>
</feature>
<feature type="binding site" description="axial binding residue" evidence="1">
    <location>
        <position position="259"/>
    </location>
    <ligand>
        <name>heme b</name>
        <dbReference type="ChEBI" id="CHEBI:60344"/>
    </ligand>
    <ligandPart>
        <name>Fe</name>
        <dbReference type="ChEBI" id="CHEBI:18248"/>
    </ligandPart>
</feature>
<feature type="site" description="Transition state stabilizer" evidence="1">
    <location>
        <position position="88"/>
    </location>
</feature>
<feature type="cross-link" description="Tryptophyl-tyrosyl-methioninium (Trp-Tyr) (with M-244)" evidence="1">
    <location>
        <begin position="91"/>
        <end position="218"/>
    </location>
</feature>
<feature type="cross-link" description="Tryptophyl-tyrosyl-methioninium (Tyr-Met) (with W-91)" evidence="1">
    <location>
        <begin position="218"/>
        <end position="244"/>
    </location>
</feature>
<evidence type="ECO:0000255" key="1">
    <source>
        <dbReference type="HAMAP-Rule" id="MF_01961"/>
    </source>
</evidence>
<name>KATG_BURMS</name>
<proteinExistence type="inferred from homology"/>
<keyword id="KW-0349">Heme</keyword>
<keyword id="KW-0376">Hydrogen peroxide</keyword>
<keyword id="KW-0408">Iron</keyword>
<keyword id="KW-0479">Metal-binding</keyword>
<keyword id="KW-0560">Oxidoreductase</keyword>
<keyword id="KW-0575">Peroxidase</keyword>
<gene>
    <name evidence="1" type="primary">katG</name>
    <name type="ordered locus">BMASAVP1_A0308</name>
</gene>
<dbReference type="EC" id="1.11.1.21" evidence="1"/>
<dbReference type="EMBL" id="CP000526">
    <property type="protein sequence ID" value="ABM50318.1"/>
    <property type="molecule type" value="Genomic_DNA"/>
</dbReference>
<dbReference type="RefSeq" id="WP_004194237.1">
    <property type="nucleotide sequence ID" value="NC_008785.1"/>
</dbReference>
<dbReference type="SMR" id="A1V0A6"/>
<dbReference type="GeneID" id="93061455"/>
<dbReference type="KEGG" id="bmv:BMASAVP1_A0308"/>
<dbReference type="HOGENOM" id="CLU_025424_2_0_4"/>
<dbReference type="GO" id="GO:0005829">
    <property type="term" value="C:cytosol"/>
    <property type="evidence" value="ECO:0007669"/>
    <property type="project" value="TreeGrafter"/>
</dbReference>
<dbReference type="GO" id="GO:0004096">
    <property type="term" value="F:catalase activity"/>
    <property type="evidence" value="ECO:0007669"/>
    <property type="project" value="UniProtKB-UniRule"/>
</dbReference>
<dbReference type="GO" id="GO:0020037">
    <property type="term" value="F:heme binding"/>
    <property type="evidence" value="ECO:0007669"/>
    <property type="project" value="InterPro"/>
</dbReference>
<dbReference type="GO" id="GO:0046872">
    <property type="term" value="F:metal ion binding"/>
    <property type="evidence" value="ECO:0007669"/>
    <property type="project" value="UniProtKB-KW"/>
</dbReference>
<dbReference type="GO" id="GO:0070301">
    <property type="term" value="P:cellular response to hydrogen peroxide"/>
    <property type="evidence" value="ECO:0007669"/>
    <property type="project" value="TreeGrafter"/>
</dbReference>
<dbReference type="GO" id="GO:0042744">
    <property type="term" value="P:hydrogen peroxide catabolic process"/>
    <property type="evidence" value="ECO:0007669"/>
    <property type="project" value="UniProtKB-KW"/>
</dbReference>
<dbReference type="CDD" id="cd00649">
    <property type="entry name" value="catalase_peroxidase_1"/>
    <property type="match status" value="1"/>
</dbReference>
<dbReference type="CDD" id="cd08200">
    <property type="entry name" value="catalase_peroxidase_2"/>
    <property type="match status" value="1"/>
</dbReference>
<dbReference type="FunFam" id="1.10.420.10:FF:000002">
    <property type="entry name" value="Catalase-peroxidase"/>
    <property type="match status" value="1"/>
</dbReference>
<dbReference type="FunFam" id="1.10.420.10:FF:000004">
    <property type="entry name" value="Catalase-peroxidase"/>
    <property type="match status" value="1"/>
</dbReference>
<dbReference type="FunFam" id="1.10.520.10:FF:000002">
    <property type="entry name" value="Catalase-peroxidase"/>
    <property type="match status" value="1"/>
</dbReference>
<dbReference type="FunFam" id="1.10.520.10:FF:000004">
    <property type="entry name" value="Catalase-peroxidase"/>
    <property type="match status" value="1"/>
</dbReference>
<dbReference type="Gene3D" id="1.10.520.10">
    <property type="match status" value="2"/>
</dbReference>
<dbReference type="Gene3D" id="1.10.420.10">
    <property type="entry name" value="Peroxidase, domain 2"/>
    <property type="match status" value="2"/>
</dbReference>
<dbReference type="HAMAP" id="MF_01961">
    <property type="entry name" value="Catal_peroxid"/>
    <property type="match status" value="1"/>
</dbReference>
<dbReference type="InterPro" id="IPR000763">
    <property type="entry name" value="Catalase_peroxidase"/>
</dbReference>
<dbReference type="InterPro" id="IPR002016">
    <property type="entry name" value="Haem_peroxidase"/>
</dbReference>
<dbReference type="InterPro" id="IPR010255">
    <property type="entry name" value="Haem_peroxidase_sf"/>
</dbReference>
<dbReference type="InterPro" id="IPR019794">
    <property type="entry name" value="Peroxidases_AS"/>
</dbReference>
<dbReference type="InterPro" id="IPR019793">
    <property type="entry name" value="Peroxidases_heam-ligand_BS"/>
</dbReference>
<dbReference type="NCBIfam" id="TIGR00198">
    <property type="entry name" value="cat_per_HPI"/>
    <property type="match status" value="1"/>
</dbReference>
<dbReference type="NCBIfam" id="NF011635">
    <property type="entry name" value="PRK15061.1"/>
    <property type="match status" value="1"/>
</dbReference>
<dbReference type="PANTHER" id="PTHR30555:SF0">
    <property type="entry name" value="CATALASE-PEROXIDASE"/>
    <property type="match status" value="1"/>
</dbReference>
<dbReference type="PANTHER" id="PTHR30555">
    <property type="entry name" value="HYDROPEROXIDASE I, BIFUNCTIONAL CATALASE-PEROXIDASE"/>
    <property type="match status" value="1"/>
</dbReference>
<dbReference type="Pfam" id="PF00141">
    <property type="entry name" value="peroxidase"/>
    <property type="match status" value="2"/>
</dbReference>
<dbReference type="PRINTS" id="PR00460">
    <property type="entry name" value="BPEROXIDASE"/>
</dbReference>
<dbReference type="PRINTS" id="PR00458">
    <property type="entry name" value="PEROXIDASE"/>
</dbReference>
<dbReference type="SUPFAM" id="SSF48113">
    <property type="entry name" value="Heme-dependent peroxidases"/>
    <property type="match status" value="2"/>
</dbReference>
<dbReference type="PROSITE" id="PS00435">
    <property type="entry name" value="PEROXIDASE_1"/>
    <property type="match status" value="1"/>
</dbReference>
<dbReference type="PROSITE" id="PS00436">
    <property type="entry name" value="PEROXIDASE_2"/>
    <property type="match status" value="1"/>
</dbReference>
<dbReference type="PROSITE" id="PS50873">
    <property type="entry name" value="PEROXIDASE_4"/>
    <property type="match status" value="1"/>
</dbReference>
<protein>
    <recommendedName>
        <fullName evidence="1">Catalase-peroxidase</fullName>
        <shortName evidence="1">CP</shortName>
        <ecNumber evidence="1">1.11.1.21</ecNumber>
    </recommendedName>
    <alternativeName>
        <fullName evidence="1">Peroxidase/catalase</fullName>
    </alternativeName>
</protein>